<name>SECB_ACIBS</name>
<accession>B0VKR1</accession>
<dbReference type="EMBL" id="CU468230">
    <property type="protein sequence ID" value="CAP02280.1"/>
    <property type="molecule type" value="Genomic_DNA"/>
</dbReference>
<dbReference type="SMR" id="B0VKR1"/>
<dbReference type="KEGG" id="abm:ABSDF2993"/>
<dbReference type="HOGENOM" id="CLU_111574_1_0_6"/>
<dbReference type="Proteomes" id="UP000001741">
    <property type="component" value="Chromosome"/>
</dbReference>
<dbReference type="GO" id="GO:0005737">
    <property type="term" value="C:cytoplasm"/>
    <property type="evidence" value="ECO:0007669"/>
    <property type="project" value="UniProtKB-SubCell"/>
</dbReference>
<dbReference type="GO" id="GO:0051082">
    <property type="term" value="F:unfolded protein binding"/>
    <property type="evidence" value="ECO:0007669"/>
    <property type="project" value="InterPro"/>
</dbReference>
<dbReference type="GO" id="GO:0006457">
    <property type="term" value="P:protein folding"/>
    <property type="evidence" value="ECO:0007669"/>
    <property type="project" value="UniProtKB-UniRule"/>
</dbReference>
<dbReference type="GO" id="GO:0051262">
    <property type="term" value="P:protein tetramerization"/>
    <property type="evidence" value="ECO:0007669"/>
    <property type="project" value="InterPro"/>
</dbReference>
<dbReference type="GO" id="GO:0015031">
    <property type="term" value="P:protein transport"/>
    <property type="evidence" value="ECO:0007669"/>
    <property type="project" value="UniProtKB-UniRule"/>
</dbReference>
<dbReference type="Gene3D" id="3.10.420.10">
    <property type="entry name" value="SecB-like"/>
    <property type="match status" value="1"/>
</dbReference>
<dbReference type="HAMAP" id="MF_00821">
    <property type="entry name" value="SecB"/>
    <property type="match status" value="1"/>
</dbReference>
<dbReference type="InterPro" id="IPR003708">
    <property type="entry name" value="SecB"/>
</dbReference>
<dbReference type="InterPro" id="IPR035958">
    <property type="entry name" value="SecB-like_sf"/>
</dbReference>
<dbReference type="NCBIfam" id="NF004393">
    <property type="entry name" value="PRK05751.1-4"/>
    <property type="match status" value="1"/>
</dbReference>
<dbReference type="NCBIfam" id="TIGR00809">
    <property type="entry name" value="secB"/>
    <property type="match status" value="1"/>
</dbReference>
<dbReference type="PANTHER" id="PTHR36918">
    <property type="match status" value="1"/>
</dbReference>
<dbReference type="PANTHER" id="PTHR36918:SF1">
    <property type="entry name" value="PROTEIN-EXPORT PROTEIN SECB"/>
    <property type="match status" value="1"/>
</dbReference>
<dbReference type="Pfam" id="PF02556">
    <property type="entry name" value="SecB"/>
    <property type="match status" value="1"/>
</dbReference>
<dbReference type="PRINTS" id="PR01594">
    <property type="entry name" value="SECBCHAPRONE"/>
</dbReference>
<dbReference type="SUPFAM" id="SSF54611">
    <property type="entry name" value="SecB-like"/>
    <property type="match status" value="1"/>
</dbReference>
<comment type="function">
    <text evidence="1">One of the proteins required for the normal export of preproteins out of the cell cytoplasm. It is a molecular chaperone that binds to a subset of precursor proteins, maintaining them in a translocation-competent state. It also specifically binds to its receptor SecA.</text>
</comment>
<comment type="subunit">
    <text evidence="1">Homotetramer, a dimer of dimers. One homotetramer interacts with 1 SecA dimer.</text>
</comment>
<comment type="subcellular location">
    <subcellularLocation>
        <location evidence="1">Cytoplasm</location>
    </subcellularLocation>
</comment>
<comment type="similarity">
    <text evidence="1">Belongs to the SecB family.</text>
</comment>
<gene>
    <name evidence="1" type="primary">secB</name>
    <name type="ordered locus">ABSDF2993</name>
</gene>
<organism>
    <name type="scientific">Acinetobacter baumannii (strain SDF)</name>
    <dbReference type="NCBI Taxonomy" id="509170"/>
    <lineage>
        <taxon>Bacteria</taxon>
        <taxon>Pseudomonadati</taxon>
        <taxon>Pseudomonadota</taxon>
        <taxon>Gammaproteobacteria</taxon>
        <taxon>Moraxellales</taxon>
        <taxon>Moraxellaceae</taxon>
        <taxon>Acinetobacter</taxon>
        <taxon>Acinetobacter calcoaceticus/baumannii complex</taxon>
    </lineage>
</organism>
<proteinExistence type="inferred from homology"/>
<protein>
    <recommendedName>
        <fullName evidence="1">Protein-export protein SecB</fullName>
    </recommendedName>
</protein>
<feature type="chain" id="PRO_1000134356" description="Protein-export protein SecB">
    <location>
        <begin position="1"/>
        <end position="152"/>
    </location>
</feature>
<reference key="1">
    <citation type="journal article" date="2008" name="PLoS ONE">
        <title>Comparative analysis of Acinetobacters: three genomes for three lifestyles.</title>
        <authorList>
            <person name="Vallenet D."/>
            <person name="Nordmann P."/>
            <person name="Barbe V."/>
            <person name="Poirel L."/>
            <person name="Mangenot S."/>
            <person name="Bataille E."/>
            <person name="Dossat C."/>
            <person name="Gas S."/>
            <person name="Kreimeyer A."/>
            <person name="Lenoble P."/>
            <person name="Oztas S."/>
            <person name="Poulain J."/>
            <person name="Segurens B."/>
            <person name="Robert C."/>
            <person name="Abergel C."/>
            <person name="Claverie J.-M."/>
            <person name="Raoult D."/>
            <person name="Medigue C."/>
            <person name="Weissenbach J."/>
            <person name="Cruveiller S."/>
        </authorList>
    </citation>
    <scope>NUCLEOTIDE SEQUENCE [LARGE SCALE GENOMIC DNA]</scope>
    <source>
        <strain>SDF</strain>
    </source>
</reference>
<keyword id="KW-0143">Chaperone</keyword>
<keyword id="KW-0963">Cytoplasm</keyword>
<keyword id="KW-0653">Protein transport</keyword>
<keyword id="KW-0811">Translocation</keyword>
<keyword id="KW-0813">Transport</keyword>
<evidence type="ECO:0000255" key="1">
    <source>
        <dbReference type="HAMAP-Rule" id="MF_00821"/>
    </source>
</evidence>
<sequence>MSEEQQVQPQLALERIYTKDISFEVPGAQVFTKQWQPELNINLSSAAEKIDPTHFEVSLKVVVQANNDNETAFIVDVTQSGIFLIDNIEEDRLPYILGAYCPNILFPFLREAVNDLVTKGSFPQLLLTPINFDAEFEANMQRAQAAAVEGQA</sequence>